<feature type="chain" id="PRO_1000205902" description="Large ribosomal subunit protein bL19">
    <location>
        <begin position="1"/>
        <end position="115"/>
    </location>
</feature>
<sequence length="115" mass="13148">MNPLIQSLTEGQLRTDIPSFRPGDTVRVHAKVVEGSRERIQIFEGVVISRKGQGISEMYTVRKISSGIGVERTFPIHTPRVEKIEVVRHGKVRRAKLYYLRALQGKAARIKEIRR</sequence>
<evidence type="ECO:0000255" key="1">
    <source>
        <dbReference type="HAMAP-Rule" id="MF_00402"/>
    </source>
</evidence>
<evidence type="ECO:0000305" key="2"/>
<keyword id="KW-0687">Ribonucleoprotein</keyword>
<keyword id="KW-0689">Ribosomal protein</keyword>
<gene>
    <name evidence="1" type="primary">rplS</name>
    <name type="ordered locus">SZO_12000</name>
</gene>
<organism>
    <name type="scientific">Streptococcus equi subsp. zooepidemicus (strain H70)</name>
    <dbReference type="NCBI Taxonomy" id="553483"/>
    <lineage>
        <taxon>Bacteria</taxon>
        <taxon>Bacillati</taxon>
        <taxon>Bacillota</taxon>
        <taxon>Bacilli</taxon>
        <taxon>Lactobacillales</taxon>
        <taxon>Streptococcaceae</taxon>
        <taxon>Streptococcus</taxon>
    </lineage>
</organism>
<accession>C0MHA6</accession>
<proteinExistence type="inferred from homology"/>
<dbReference type="EMBL" id="FM204884">
    <property type="protein sequence ID" value="CAW99666.1"/>
    <property type="molecule type" value="Genomic_DNA"/>
</dbReference>
<dbReference type="SMR" id="C0MHA6"/>
<dbReference type="KEGG" id="seq:SZO_12000"/>
<dbReference type="eggNOG" id="COG0335">
    <property type="taxonomic scope" value="Bacteria"/>
</dbReference>
<dbReference type="HOGENOM" id="CLU_103507_2_1_9"/>
<dbReference type="Proteomes" id="UP000001368">
    <property type="component" value="Chromosome"/>
</dbReference>
<dbReference type="GO" id="GO:0022625">
    <property type="term" value="C:cytosolic large ribosomal subunit"/>
    <property type="evidence" value="ECO:0007669"/>
    <property type="project" value="TreeGrafter"/>
</dbReference>
<dbReference type="GO" id="GO:0003735">
    <property type="term" value="F:structural constituent of ribosome"/>
    <property type="evidence" value="ECO:0007669"/>
    <property type="project" value="InterPro"/>
</dbReference>
<dbReference type="GO" id="GO:0006412">
    <property type="term" value="P:translation"/>
    <property type="evidence" value="ECO:0007669"/>
    <property type="project" value="UniProtKB-UniRule"/>
</dbReference>
<dbReference type="FunFam" id="2.30.30.790:FF:000001">
    <property type="entry name" value="50S ribosomal protein L19"/>
    <property type="match status" value="1"/>
</dbReference>
<dbReference type="Gene3D" id="2.30.30.790">
    <property type="match status" value="1"/>
</dbReference>
<dbReference type="HAMAP" id="MF_00402">
    <property type="entry name" value="Ribosomal_bL19"/>
    <property type="match status" value="1"/>
</dbReference>
<dbReference type="InterPro" id="IPR001857">
    <property type="entry name" value="Ribosomal_bL19"/>
</dbReference>
<dbReference type="InterPro" id="IPR018257">
    <property type="entry name" value="Ribosomal_bL19_CS"/>
</dbReference>
<dbReference type="InterPro" id="IPR038657">
    <property type="entry name" value="Ribosomal_bL19_sf"/>
</dbReference>
<dbReference type="InterPro" id="IPR008991">
    <property type="entry name" value="Translation_prot_SH3-like_sf"/>
</dbReference>
<dbReference type="NCBIfam" id="TIGR01024">
    <property type="entry name" value="rplS_bact"/>
    <property type="match status" value="1"/>
</dbReference>
<dbReference type="PANTHER" id="PTHR15680:SF9">
    <property type="entry name" value="LARGE RIBOSOMAL SUBUNIT PROTEIN BL19M"/>
    <property type="match status" value="1"/>
</dbReference>
<dbReference type="PANTHER" id="PTHR15680">
    <property type="entry name" value="RIBOSOMAL PROTEIN L19"/>
    <property type="match status" value="1"/>
</dbReference>
<dbReference type="Pfam" id="PF01245">
    <property type="entry name" value="Ribosomal_L19"/>
    <property type="match status" value="1"/>
</dbReference>
<dbReference type="PIRSF" id="PIRSF002191">
    <property type="entry name" value="Ribosomal_L19"/>
    <property type="match status" value="1"/>
</dbReference>
<dbReference type="PRINTS" id="PR00061">
    <property type="entry name" value="RIBOSOMALL19"/>
</dbReference>
<dbReference type="SUPFAM" id="SSF50104">
    <property type="entry name" value="Translation proteins SH3-like domain"/>
    <property type="match status" value="1"/>
</dbReference>
<dbReference type="PROSITE" id="PS01015">
    <property type="entry name" value="RIBOSOMAL_L19"/>
    <property type="match status" value="1"/>
</dbReference>
<protein>
    <recommendedName>
        <fullName evidence="1">Large ribosomal subunit protein bL19</fullName>
    </recommendedName>
    <alternativeName>
        <fullName evidence="2">50S ribosomal protein L19</fullName>
    </alternativeName>
</protein>
<reference key="1">
    <citation type="journal article" date="2009" name="PLoS Pathog.">
        <title>Genomic evidence for the evolution of Streptococcus equi: host restriction, increased virulence, and genetic exchange with human pathogens.</title>
        <authorList>
            <person name="Holden M.T.G."/>
            <person name="Heather Z."/>
            <person name="Paillot R."/>
            <person name="Steward K.F."/>
            <person name="Webb K."/>
            <person name="Ainslie F."/>
            <person name="Jourdan T."/>
            <person name="Bason N.C."/>
            <person name="Holroyd N.E."/>
            <person name="Mungall K."/>
            <person name="Quail M.A."/>
            <person name="Sanders M."/>
            <person name="Simmonds M."/>
            <person name="Willey D."/>
            <person name="Brooks K."/>
            <person name="Aanensen D.M."/>
            <person name="Spratt B.G."/>
            <person name="Jolley K.A."/>
            <person name="Maiden M.C.J."/>
            <person name="Kehoe M."/>
            <person name="Chanter N."/>
            <person name="Bentley S.D."/>
            <person name="Robinson C."/>
            <person name="Maskell D.J."/>
            <person name="Parkhill J."/>
            <person name="Waller A.S."/>
        </authorList>
    </citation>
    <scope>NUCLEOTIDE SEQUENCE [LARGE SCALE GENOMIC DNA]</scope>
    <source>
        <strain>H70</strain>
    </source>
</reference>
<name>RL19_STRS7</name>
<comment type="function">
    <text evidence="1">This protein is located at the 30S-50S ribosomal subunit interface and may play a role in the structure and function of the aminoacyl-tRNA binding site.</text>
</comment>
<comment type="similarity">
    <text evidence="1">Belongs to the bacterial ribosomal protein bL19 family.</text>
</comment>